<reference key="1">
    <citation type="journal article" date="2000" name="Nature">
        <title>Sequence and analysis of chromosome 1 of the plant Arabidopsis thaliana.</title>
        <authorList>
            <person name="Theologis A."/>
            <person name="Ecker J.R."/>
            <person name="Palm C.J."/>
            <person name="Federspiel N.A."/>
            <person name="Kaul S."/>
            <person name="White O."/>
            <person name="Alonso J."/>
            <person name="Altafi H."/>
            <person name="Araujo R."/>
            <person name="Bowman C.L."/>
            <person name="Brooks S.Y."/>
            <person name="Buehler E."/>
            <person name="Chan A."/>
            <person name="Chao Q."/>
            <person name="Chen H."/>
            <person name="Cheuk R.F."/>
            <person name="Chin C.W."/>
            <person name="Chung M.K."/>
            <person name="Conn L."/>
            <person name="Conway A.B."/>
            <person name="Conway A.R."/>
            <person name="Creasy T.H."/>
            <person name="Dewar K."/>
            <person name="Dunn P."/>
            <person name="Etgu P."/>
            <person name="Feldblyum T.V."/>
            <person name="Feng J.-D."/>
            <person name="Fong B."/>
            <person name="Fujii C.Y."/>
            <person name="Gill J.E."/>
            <person name="Goldsmith A.D."/>
            <person name="Haas B."/>
            <person name="Hansen N.F."/>
            <person name="Hughes B."/>
            <person name="Huizar L."/>
            <person name="Hunter J.L."/>
            <person name="Jenkins J."/>
            <person name="Johnson-Hopson C."/>
            <person name="Khan S."/>
            <person name="Khaykin E."/>
            <person name="Kim C.J."/>
            <person name="Koo H.L."/>
            <person name="Kremenetskaia I."/>
            <person name="Kurtz D.B."/>
            <person name="Kwan A."/>
            <person name="Lam B."/>
            <person name="Langin-Hooper S."/>
            <person name="Lee A."/>
            <person name="Lee J.M."/>
            <person name="Lenz C.A."/>
            <person name="Li J.H."/>
            <person name="Li Y.-P."/>
            <person name="Lin X."/>
            <person name="Liu S.X."/>
            <person name="Liu Z.A."/>
            <person name="Luros J.S."/>
            <person name="Maiti R."/>
            <person name="Marziali A."/>
            <person name="Militscher J."/>
            <person name="Miranda M."/>
            <person name="Nguyen M."/>
            <person name="Nierman W.C."/>
            <person name="Osborne B.I."/>
            <person name="Pai G."/>
            <person name="Peterson J."/>
            <person name="Pham P.K."/>
            <person name="Rizzo M."/>
            <person name="Rooney T."/>
            <person name="Rowley D."/>
            <person name="Sakano H."/>
            <person name="Salzberg S.L."/>
            <person name="Schwartz J.R."/>
            <person name="Shinn P."/>
            <person name="Southwick A.M."/>
            <person name="Sun H."/>
            <person name="Tallon L.J."/>
            <person name="Tambunga G."/>
            <person name="Toriumi M.J."/>
            <person name="Town C.D."/>
            <person name="Utterback T."/>
            <person name="Van Aken S."/>
            <person name="Vaysberg M."/>
            <person name="Vysotskaia V.S."/>
            <person name="Walker M."/>
            <person name="Wu D."/>
            <person name="Yu G."/>
            <person name="Fraser C.M."/>
            <person name="Venter J.C."/>
            <person name="Davis R.W."/>
        </authorList>
    </citation>
    <scope>NUCLEOTIDE SEQUENCE [LARGE SCALE GENOMIC DNA]</scope>
    <source>
        <strain>cv. Columbia</strain>
    </source>
</reference>
<reference key="2">
    <citation type="journal article" date="2017" name="Plant J.">
        <title>Araport11: a complete reannotation of the Arabidopsis thaliana reference genome.</title>
        <authorList>
            <person name="Cheng C.Y."/>
            <person name="Krishnakumar V."/>
            <person name="Chan A.P."/>
            <person name="Thibaud-Nissen F."/>
            <person name="Schobel S."/>
            <person name="Town C.D."/>
        </authorList>
    </citation>
    <scope>GENOME REANNOTATION</scope>
    <source>
        <strain>cv. Columbia</strain>
    </source>
</reference>
<reference key="3">
    <citation type="submission" date="2007-03" db="EMBL/GenBank/DDBJ databases">
        <title>Arabidopsis ORF clones.</title>
        <authorList>
            <person name="Kim C.J."/>
            <person name="Bautista V.R."/>
            <person name="Chen H."/>
            <person name="De Los Reyes C."/>
            <person name="Wu S.Y."/>
            <person name="Ecker J.R."/>
        </authorList>
    </citation>
    <scope>NUCLEOTIDE SEQUENCE [LARGE SCALE MRNA]</scope>
    <source>
        <strain>cv. Columbia</strain>
    </source>
</reference>
<reference key="4">
    <citation type="journal article" date="2008" name="BMC Genomics">
        <title>Genome-wide analysis of CCCH zinc finger family in Arabidopsis and rice.</title>
        <authorList>
            <person name="Wang D."/>
            <person name="Guo Y."/>
            <person name="Wu C."/>
            <person name="Yang G."/>
            <person name="Li Y."/>
            <person name="Zheng C."/>
        </authorList>
    </citation>
    <scope>NOMENCLATURE</scope>
</reference>
<reference key="5">
    <citation type="journal article" date="2008" name="FEBS Lett.">
        <title>Ribonuclease activity is a common property of Arabidopsis CCCH-containing zinc-finger proteins.</title>
        <authorList>
            <person name="Addepalli B."/>
            <person name="Hunt A.G."/>
        </authorList>
    </citation>
    <scope>FUNCTION</scope>
    <scope>MUTAGENESIS OF CYS-262; PRO-263; HIS-266; CYS-287; LYS-288; HIS-291; CYS-314; PRO-315; HIS-318; CYS-342; ARG-343; HIS-346; CYS-365; LYS-366 AND HIS-369</scope>
</reference>
<keyword id="KW-0238">DNA-binding</keyword>
<keyword id="KW-0378">Hydrolase</keyword>
<keyword id="KW-0479">Metal-binding</keyword>
<keyword id="KW-0540">Nuclease</keyword>
<keyword id="KW-1185">Reference proteome</keyword>
<keyword id="KW-0677">Repeat</keyword>
<keyword id="KW-0694">RNA-binding</keyword>
<keyword id="KW-0862">Zinc</keyword>
<keyword id="KW-0863">Zinc-finger</keyword>
<dbReference type="EC" id="3.1.-.-"/>
<dbReference type="EMBL" id="AC015447">
    <property type="protein sequence ID" value="AAF87903.1"/>
    <property type="status" value="ALT_SEQ"/>
    <property type="molecule type" value="Genomic_DNA"/>
</dbReference>
<dbReference type="EMBL" id="CP002684">
    <property type="protein sequence ID" value="AEE30120.1"/>
    <property type="status" value="ALT_SEQ"/>
    <property type="molecule type" value="Genomic_DNA"/>
</dbReference>
<dbReference type="EMBL" id="BT030384">
    <property type="protein sequence ID" value="ABO45687.1"/>
    <property type="molecule type" value="mRNA"/>
</dbReference>
<dbReference type="STRING" id="3702.Q3ED78"/>
<dbReference type="PeptideAtlas" id="Q3ED78"/>
<dbReference type="ProteomicsDB" id="240525"/>
<dbReference type="Araport" id="AT1G21570"/>
<dbReference type="TAIR" id="AT1G21570"/>
<dbReference type="HOGENOM" id="CLU_001506_0_0_1"/>
<dbReference type="InParanoid" id="Q3ED78"/>
<dbReference type="PhylomeDB" id="Q3ED78"/>
<dbReference type="PRO" id="PR:Q3ED78"/>
<dbReference type="Proteomes" id="UP000006548">
    <property type="component" value="Chromosome 1"/>
</dbReference>
<dbReference type="ExpressionAtlas" id="Q3ED78">
    <property type="expression patterns" value="baseline and differential"/>
</dbReference>
<dbReference type="GO" id="GO:0003677">
    <property type="term" value="F:DNA binding"/>
    <property type="evidence" value="ECO:0007669"/>
    <property type="project" value="UniProtKB-KW"/>
</dbReference>
<dbReference type="GO" id="GO:0004518">
    <property type="term" value="F:nuclease activity"/>
    <property type="evidence" value="ECO:0007669"/>
    <property type="project" value="UniProtKB-KW"/>
</dbReference>
<dbReference type="GO" id="GO:0003723">
    <property type="term" value="F:RNA binding"/>
    <property type="evidence" value="ECO:0007669"/>
    <property type="project" value="UniProtKB-KW"/>
</dbReference>
<dbReference type="GO" id="GO:0008270">
    <property type="term" value="F:zinc ion binding"/>
    <property type="evidence" value="ECO:0007669"/>
    <property type="project" value="UniProtKB-KW"/>
</dbReference>
<dbReference type="FunFam" id="4.10.1000.10:FF:000008">
    <property type="entry name" value="zinc finger CCCH domain-containing protein 3"/>
    <property type="match status" value="1"/>
</dbReference>
<dbReference type="FunFam" id="4.10.1000.10:FF:000022">
    <property type="entry name" value="Zinc finger CCCH domain-containing protein 7"/>
    <property type="match status" value="1"/>
</dbReference>
<dbReference type="Gene3D" id="4.10.1000.10">
    <property type="entry name" value="Zinc finger, CCCH-type"/>
    <property type="match status" value="2"/>
</dbReference>
<dbReference type="InterPro" id="IPR000571">
    <property type="entry name" value="Znf_CCCH"/>
</dbReference>
<dbReference type="PANTHER" id="PTHR46156">
    <property type="entry name" value="CCCH ZINGC FINGER"/>
    <property type="match status" value="1"/>
</dbReference>
<dbReference type="PANTHER" id="PTHR46156:SF1">
    <property type="entry name" value="ZINC FINGER CCCH DOMAIN-CONTAINING PROTEIN 3"/>
    <property type="match status" value="1"/>
</dbReference>
<dbReference type="SMART" id="SM00356">
    <property type="entry name" value="ZnF_C3H1"/>
    <property type="match status" value="5"/>
</dbReference>
<dbReference type="PROSITE" id="PS50103">
    <property type="entry name" value="ZF_C3H1"/>
    <property type="match status" value="5"/>
</dbReference>
<protein>
    <recommendedName>
        <fullName>Zinc finger CCCH domain-containing protein 7</fullName>
        <shortName>AtC3H7</shortName>
        <ecNumber>3.1.-.-</ecNumber>
    </recommendedName>
    <alternativeName>
        <fullName>AtSmicl</fullName>
    </alternativeName>
</protein>
<proteinExistence type="evidence at protein level"/>
<organism>
    <name type="scientific">Arabidopsis thaliana</name>
    <name type="common">Mouse-ear cress</name>
    <dbReference type="NCBI Taxonomy" id="3702"/>
    <lineage>
        <taxon>Eukaryota</taxon>
        <taxon>Viridiplantae</taxon>
        <taxon>Streptophyta</taxon>
        <taxon>Embryophyta</taxon>
        <taxon>Tracheophyta</taxon>
        <taxon>Spermatophyta</taxon>
        <taxon>Magnoliopsida</taxon>
        <taxon>eudicotyledons</taxon>
        <taxon>Gunneridae</taxon>
        <taxon>Pentapetalae</taxon>
        <taxon>rosids</taxon>
        <taxon>malvids</taxon>
        <taxon>Brassicales</taxon>
        <taxon>Brassicaceae</taxon>
        <taxon>Camelineae</taxon>
        <taxon>Arabidopsis</taxon>
    </lineage>
</organism>
<sequence length="470" mass="53768">MRPFKQSKFSLVWTQNDPQPRMPIAHMRNQNIVPQLVPWKRVTYWRRLMNSVSAFRNGSSLNISRKLSMMRKRHTIYTRSTNGYSLRKSKVLSVGGSHLKWSKSIERDSRKANEEATLAVAAYSKKESEKQSGQNNTSTASRNHLARERVFRFGSLRYKMDSSRRTLQRISDVDSPCSGPSENGKGVKRPFIPKRLVIGNEEYVRFGNGNQLVRDPKKRTRVLANEKVRWSLHNARLRLAKKKKYCQFFTRFGKCNKDDGKCPYVHDPSKIAVCTKFLNGLCANANCKLTHKVIPERMPDCSYYLQGLCNNEACPYRHVHVNPIAPICDGFLKGYCSEGDECRKKHSYNCPVFEATGSCSQGLKCKLHHPKNQSKGRKRKRTNEPSQKNARRRYFSSLHNILSESEPMVFNRRSTDSEVFGMESLDFITLGTAEYEAGDDNDPATVQSISSDSESLISIYNLITPVALMQ</sequence>
<feature type="chain" id="PRO_0000343168" description="Zinc finger CCCH domain-containing protein 7">
    <location>
        <begin position="1"/>
        <end position="470"/>
    </location>
</feature>
<feature type="zinc finger region" description="C3H1-type 1" evidence="1">
    <location>
        <begin position="240"/>
        <end position="269"/>
    </location>
</feature>
<feature type="zinc finger region" description="C3H1-type 2" evidence="1">
    <location>
        <begin position="273"/>
        <end position="294"/>
    </location>
</feature>
<feature type="zinc finger region" description="C3H1-type 3" evidence="1">
    <location>
        <begin position="295"/>
        <end position="321"/>
    </location>
</feature>
<feature type="zinc finger region" description="C3H1-type 4" evidence="1">
    <location>
        <begin position="322"/>
        <end position="349"/>
    </location>
</feature>
<feature type="zinc finger region" description="C3H1-type 5" evidence="1">
    <location>
        <begin position="350"/>
        <end position="372"/>
    </location>
</feature>
<feature type="region of interest" description="Disordered" evidence="2">
    <location>
        <begin position="122"/>
        <end position="144"/>
    </location>
</feature>
<feature type="region of interest" description="Disordered" evidence="2">
    <location>
        <begin position="370"/>
        <end position="389"/>
    </location>
</feature>
<feature type="compositionally biased region" description="Polar residues" evidence="2">
    <location>
        <begin position="131"/>
        <end position="142"/>
    </location>
</feature>
<feature type="compositionally biased region" description="Basic residues" evidence="2">
    <location>
        <begin position="370"/>
        <end position="381"/>
    </location>
</feature>
<feature type="mutagenesis site" description="Loss of RNA binding and reduction of ribonuclease activity; when associated with P-263 and H-266." evidence="3">
    <original>C</original>
    <variation>S</variation>
    <location>
        <position position="262"/>
    </location>
</feature>
<feature type="mutagenesis site" description="Loss of RNA binding and reduction of ribonuclease activity; when associated with C-262 and H-266." evidence="3">
    <original>P</original>
    <variation>T</variation>
    <location>
        <position position="263"/>
    </location>
</feature>
<feature type="mutagenesis site" description="Loss of RNA binding and reduction of ribonuclease activity; when associated with C-262 and P-263." evidence="3">
    <original>H</original>
    <variation>Y</variation>
    <location>
        <position position="266"/>
    </location>
</feature>
<feature type="mutagenesis site" description="Loss of RNA binding and reduction of ribonuclease activity; when associated with K-288 and H-291." evidence="3">
    <original>C</original>
    <variation>S</variation>
    <location>
        <position position="287"/>
    </location>
</feature>
<feature type="mutagenesis site" description="Loss of RNA binding and reduction of ribonuclease activity; when associated with C-287 and H-291." evidence="3">
    <original>K</original>
    <variation>T</variation>
    <location>
        <position position="288"/>
    </location>
</feature>
<feature type="mutagenesis site" description="Loss of RNA binding and reduction of ribonuclease activity; when associated with C-287 and K-288." evidence="3">
    <original>H</original>
    <variation>Y</variation>
    <location>
        <position position="291"/>
    </location>
</feature>
<feature type="mutagenesis site" description="No effect on RNA-binding and ribonuclease activities; when associated with P-315 and H-318." evidence="3">
    <original>C</original>
    <variation>S</variation>
    <location>
        <position position="314"/>
    </location>
</feature>
<feature type="mutagenesis site" description="No effect on RNA-binding and ribonuclease activities; when associated with C-314 and H-318." evidence="3">
    <original>P</original>
    <variation>T</variation>
    <location>
        <position position="315"/>
    </location>
</feature>
<feature type="mutagenesis site" description="No effect on RNA-binding and ribonuclease activities; when associated with C-314 and P-318." evidence="3">
    <original>H</original>
    <variation>Y</variation>
    <location>
        <position position="318"/>
    </location>
</feature>
<feature type="mutagenesis site" description="No effect on RNA-binding and ribonuclease activities; when associated with R-343 and H-346." evidence="3">
    <original>C</original>
    <variation>S</variation>
    <location>
        <position position="342"/>
    </location>
</feature>
<feature type="mutagenesis site" description="No effect on RNA-binding and ribonuclease activities; when associated with C-342 and H-346." evidence="3">
    <original>R</original>
    <variation>T</variation>
    <location>
        <position position="343"/>
    </location>
</feature>
<feature type="mutagenesis site" description="No effect on RNA-binding and ribonuclease activities; when associated with C-342 and R-343." evidence="3">
    <original>H</original>
    <variation>Y</variation>
    <location>
        <position position="346"/>
    </location>
</feature>
<feature type="mutagenesis site" description="Loss of RNA binding and reduction of ribonuclease activity; when associated with K-366 and H-369." evidence="3">
    <original>C</original>
    <variation>S</variation>
    <location>
        <position position="365"/>
    </location>
</feature>
<feature type="mutagenesis site" description="Loss of RNA binding and reduction of ribonuclease activity; when associated with C-365 and H-369." evidence="3">
    <original>K</original>
    <variation>T</variation>
    <location>
        <position position="366"/>
    </location>
</feature>
<feature type="mutagenesis site" description="Loss of RNA binding and reduction of ribonuclease activity; when associated with C-365 and K-366." evidence="3">
    <original>H</original>
    <variation>Y</variation>
    <location>
        <position position="369"/>
    </location>
</feature>
<gene>
    <name type="ordered locus">At1g21570</name>
    <name type="ORF">F24J8.21</name>
</gene>
<accession>Q3ED78</accession>
<accession>F4HY24</accession>
<accession>Q0WQL3</accession>
<accession>Q9LPK3</accession>
<comment type="function">
    <text evidence="3">Possesses RNA-binding and ribonuclease activities in vitro.</text>
</comment>
<comment type="sequence caution" evidence="4">
    <conflict type="erroneous gene model prediction">
        <sequence resource="EMBL-CDS" id="AAF87903"/>
    </conflict>
    <text>The predicted gene has been split into 2 genes: At1g21570 and At1g21580.</text>
</comment>
<comment type="sequence caution" evidence="4">
    <conflict type="erroneous gene model prediction">
        <sequence resource="EMBL-CDS" id="AEE30120"/>
    </conflict>
    <text>The predicted gene has been split into 2 genes: At1g21570 and At1g21580.</text>
</comment>
<evidence type="ECO:0000255" key="1">
    <source>
        <dbReference type="PROSITE-ProRule" id="PRU00723"/>
    </source>
</evidence>
<evidence type="ECO:0000256" key="2">
    <source>
        <dbReference type="SAM" id="MobiDB-lite"/>
    </source>
</evidence>
<evidence type="ECO:0000269" key="3">
    <source>
    </source>
</evidence>
<evidence type="ECO:0000305" key="4"/>
<name>C3H7_ARATH</name>